<feature type="chain" id="PRO_1000116812" description="Acetate kinase">
    <location>
        <begin position="1"/>
        <end position="396"/>
    </location>
</feature>
<feature type="active site" description="Proton donor/acceptor" evidence="1">
    <location>
        <position position="146"/>
    </location>
</feature>
<feature type="binding site" evidence="1">
    <location>
        <position position="8"/>
    </location>
    <ligand>
        <name>Mg(2+)</name>
        <dbReference type="ChEBI" id="CHEBI:18420"/>
    </ligand>
</feature>
<feature type="binding site" evidence="1">
    <location>
        <position position="15"/>
    </location>
    <ligand>
        <name>ATP</name>
        <dbReference type="ChEBI" id="CHEBI:30616"/>
    </ligand>
</feature>
<feature type="binding site" evidence="1">
    <location>
        <position position="89"/>
    </location>
    <ligand>
        <name>substrate</name>
    </ligand>
</feature>
<feature type="binding site" evidence="1">
    <location>
        <begin position="206"/>
        <end position="210"/>
    </location>
    <ligand>
        <name>ATP</name>
        <dbReference type="ChEBI" id="CHEBI:30616"/>
    </ligand>
</feature>
<feature type="binding site" evidence="1">
    <location>
        <begin position="283"/>
        <end position="285"/>
    </location>
    <ligand>
        <name>ATP</name>
        <dbReference type="ChEBI" id="CHEBI:30616"/>
    </ligand>
</feature>
<feature type="binding site" evidence="1">
    <location>
        <begin position="331"/>
        <end position="335"/>
    </location>
    <ligand>
        <name>ATP</name>
        <dbReference type="ChEBI" id="CHEBI:30616"/>
    </ligand>
</feature>
<feature type="binding site" evidence="1">
    <location>
        <position position="383"/>
    </location>
    <ligand>
        <name>Mg(2+)</name>
        <dbReference type="ChEBI" id="CHEBI:18420"/>
    </ligand>
</feature>
<feature type="site" description="Transition state stabilizer" evidence="1">
    <location>
        <position position="178"/>
    </location>
</feature>
<feature type="site" description="Transition state stabilizer" evidence="1">
    <location>
        <position position="239"/>
    </location>
</feature>
<evidence type="ECO:0000255" key="1">
    <source>
        <dbReference type="HAMAP-Rule" id="MF_00020"/>
    </source>
</evidence>
<keyword id="KW-0067">ATP-binding</keyword>
<keyword id="KW-0963">Cytoplasm</keyword>
<keyword id="KW-0418">Kinase</keyword>
<keyword id="KW-0460">Magnesium</keyword>
<keyword id="KW-0479">Metal-binding</keyword>
<keyword id="KW-0547">Nucleotide-binding</keyword>
<keyword id="KW-1185">Reference proteome</keyword>
<keyword id="KW-0808">Transferase</keyword>
<protein>
    <recommendedName>
        <fullName evidence="1">Acetate kinase</fullName>
        <ecNumber evidence="1">2.7.2.1</ecNumber>
    </recommendedName>
    <alternativeName>
        <fullName evidence="1">Acetokinase</fullName>
    </alternativeName>
</protein>
<sequence length="396" mass="43487">MSKTIAINAGSSSLKWQLYQMPEETVLAQGIIERIGLKDSISTVKFNGNKEEQVTDIPDHTTAVKILLNDLIHLNIISAYDEITGVGHRIVAGGEYFTDSVLVDEKVIEQVEELSALAPLHNPGAAAGIRAFREILPDITSVCVFDNAFHMTMQKHTYLYPIPQKYYTEHKVRKYGAHGTSHKYVAQEAAKMLGRPLEELKLITAHIGNGVSITANYHGQSVDTSMGFTPLAGPMMGTRSGDIDPAIIPYIIERDPELKDAADAINMLNKKSGLGGVSGISSDMRDIEAGLQEKNPDAVLAYNIFIDRIKKFIGQYFAVLNGADALVFTAGMGENAPLMRQDVINGMSWFGMEIDPEKNVFGYRGDISTPNSKVKVLVISTDEELCIARDVERLKK</sequence>
<gene>
    <name evidence="1" type="primary">ackA</name>
    <name type="ordered locus">SUB0126</name>
</gene>
<proteinExistence type="inferred from homology"/>
<dbReference type="EC" id="2.7.2.1" evidence="1"/>
<dbReference type="EMBL" id="AM946015">
    <property type="protein sequence ID" value="CAR40541.1"/>
    <property type="molecule type" value="Genomic_DNA"/>
</dbReference>
<dbReference type="RefSeq" id="WP_012657681.1">
    <property type="nucleotide sequence ID" value="NC_012004.1"/>
</dbReference>
<dbReference type="SMR" id="B9DT06"/>
<dbReference type="STRING" id="218495.SUB0126"/>
<dbReference type="KEGG" id="sub:SUB0126"/>
<dbReference type="eggNOG" id="COG0282">
    <property type="taxonomic scope" value="Bacteria"/>
</dbReference>
<dbReference type="HOGENOM" id="CLU_020352_0_1_9"/>
<dbReference type="OrthoDB" id="9802453at2"/>
<dbReference type="UniPathway" id="UPA00340">
    <property type="reaction ID" value="UER00458"/>
</dbReference>
<dbReference type="Proteomes" id="UP000000449">
    <property type="component" value="Chromosome"/>
</dbReference>
<dbReference type="GO" id="GO:0005737">
    <property type="term" value="C:cytoplasm"/>
    <property type="evidence" value="ECO:0007669"/>
    <property type="project" value="UniProtKB-SubCell"/>
</dbReference>
<dbReference type="GO" id="GO:0008776">
    <property type="term" value="F:acetate kinase activity"/>
    <property type="evidence" value="ECO:0007669"/>
    <property type="project" value="UniProtKB-UniRule"/>
</dbReference>
<dbReference type="GO" id="GO:0005524">
    <property type="term" value="F:ATP binding"/>
    <property type="evidence" value="ECO:0007669"/>
    <property type="project" value="UniProtKB-KW"/>
</dbReference>
<dbReference type="GO" id="GO:0000287">
    <property type="term" value="F:magnesium ion binding"/>
    <property type="evidence" value="ECO:0007669"/>
    <property type="project" value="UniProtKB-UniRule"/>
</dbReference>
<dbReference type="GO" id="GO:0006083">
    <property type="term" value="P:acetate metabolic process"/>
    <property type="evidence" value="ECO:0007669"/>
    <property type="project" value="TreeGrafter"/>
</dbReference>
<dbReference type="GO" id="GO:0006085">
    <property type="term" value="P:acetyl-CoA biosynthetic process"/>
    <property type="evidence" value="ECO:0007669"/>
    <property type="project" value="UniProtKB-UniRule"/>
</dbReference>
<dbReference type="CDD" id="cd24010">
    <property type="entry name" value="ASKHA_NBD_AcK_PK"/>
    <property type="match status" value="1"/>
</dbReference>
<dbReference type="Gene3D" id="3.30.420.40">
    <property type="match status" value="2"/>
</dbReference>
<dbReference type="HAMAP" id="MF_00020">
    <property type="entry name" value="Acetate_kinase"/>
    <property type="match status" value="1"/>
</dbReference>
<dbReference type="InterPro" id="IPR004372">
    <property type="entry name" value="Ac/propionate_kinase"/>
</dbReference>
<dbReference type="InterPro" id="IPR000890">
    <property type="entry name" value="Aliphatic_acid_kin_short-chain"/>
</dbReference>
<dbReference type="InterPro" id="IPR023865">
    <property type="entry name" value="Aliphatic_acid_kinase_CS"/>
</dbReference>
<dbReference type="InterPro" id="IPR043129">
    <property type="entry name" value="ATPase_NBD"/>
</dbReference>
<dbReference type="NCBIfam" id="TIGR00016">
    <property type="entry name" value="ackA"/>
    <property type="match status" value="1"/>
</dbReference>
<dbReference type="PANTHER" id="PTHR21060">
    <property type="entry name" value="ACETATE KINASE"/>
    <property type="match status" value="1"/>
</dbReference>
<dbReference type="PANTHER" id="PTHR21060:SF15">
    <property type="entry name" value="ACETATE KINASE-RELATED"/>
    <property type="match status" value="1"/>
</dbReference>
<dbReference type="Pfam" id="PF00871">
    <property type="entry name" value="Acetate_kinase"/>
    <property type="match status" value="1"/>
</dbReference>
<dbReference type="PIRSF" id="PIRSF000722">
    <property type="entry name" value="Acetate_prop_kin"/>
    <property type="match status" value="1"/>
</dbReference>
<dbReference type="PRINTS" id="PR00471">
    <property type="entry name" value="ACETATEKNASE"/>
</dbReference>
<dbReference type="SUPFAM" id="SSF53067">
    <property type="entry name" value="Actin-like ATPase domain"/>
    <property type="match status" value="2"/>
</dbReference>
<dbReference type="PROSITE" id="PS01075">
    <property type="entry name" value="ACETATE_KINASE_1"/>
    <property type="match status" value="1"/>
</dbReference>
<dbReference type="PROSITE" id="PS01076">
    <property type="entry name" value="ACETATE_KINASE_2"/>
    <property type="match status" value="1"/>
</dbReference>
<comment type="function">
    <text evidence="1">Catalyzes the formation of acetyl phosphate from acetate and ATP. Can also catalyze the reverse reaction.</text>
</comment>
<comment type="catalytic activity">
    <reaction evidence="1">
        <text>acetate + ATP = acetyl phosphate + ADP</text>
        <dbReference type="Rhea" id="RHEA:11352"/>
        <dbReference type="ChEBI" id="CHEBI:22191"/>
        <dbReference type="ChEBI" id="CHEBI:30089"/>
        <dbReference type="ChEBI" id="CHEBI:30616"/>
        <dbReference type="ChEBI" id="CHEBI:456216"/>
        <dbReference type="EC" id="2.7.2.1"/>
    </reaction>
</comment>
<comment type="cofactor">
    <cofactor evidence="1">
        <name>Mg(2+)</name>
        <dbReference type="ChEBI" id="CHEBI:18420"/>
    </cofactor>
    <cofactor evidence="1">
        <name>Mn(2+)</name>
        <dbReference type="ChEBI" id="CHEBI:29035"/>
    </cofactor>
    <text evidence="1">Mg(2+). Can also accept Mn(2+).</text>
</comment>
<comment type="pathway">
    <text evidence="1">Metabolic intermediate biosynthesis; acetyl-CoA biosynthesis; acetyl-CoA from acetate: step 1/2.</text>
</comment>
<comment type="subunit">
    <text evidence="1">Homodimer.</text>
</comment>
<comment type="subcellular location">
    <subcellularLocation>
        <location evidence="1">Cytoplasm</location>
    </subcellularLocation>
</comment>
<comment type="similarity">
    <text evidence="1">Belongs to the acetokinase family.</text>
</comment>
<organism>
    <name type="scientific">Streptococcus uberis (strain ATCC BAA-854 / 0140J)</name>
    <dbReference type="NCBI Taxonomy" id="218495"/>
    <lineage>
        <taxon>Bacteria</taxon>
        <taxon>Bacillati</taxon>
        <taxon>Bacillota</taxon>
        <taxon>Bacilli</taxon>
        <taxon>Lactobacillales</taxon>
        <taxon>Streptococcaceae</taxon>
        <taxon>Streptococcus</taxon>
    </lineage>
</organism>
<reference key="1">
    <citation type="journal article" date="2009" name="BMC Genomics">
        <title>Evidence for niche adaptation in the genome of the bovine pathogen Streptococcus uberis.</title>
        <authorList>
            <person name="Ward P.N."/>
            <person name="Holden M.T.G."/>
            <person name="Leigh J.A."/>
            <person name="Lennard N."/>
            <person name="Bignell A."/>
            <person name="Barron A."/>
            <person name="Clark L."/>
            <person name="Quail M.A."/>
            <person name="Woodward J."/>
            <person name="Barrell B.G."/>
            <person name="Egan S.A."/>
            <person name="Field T.R."/>
            <person name="Maskell D."/>
            <person name="Kehoe M."/>
            <person name="Dowson C.G."/>
            <person name="Chanter N."/>
            <person name="Whatmore A.M."/>
            <person name="Bentley S.D."/>
            <person name="Parkhill J."/>
        </authorList>
    </citation>
    <scope>NUCLEOTIDE SEQUENCE [LARGE SCALE GENOMIC DNA]</scope>
    <source>
        <strain>ATCC BAA-854 / 0140J</strain>
    </source>
</reference>
<accession>B9DT06</accession>
<name>ACKA_STRU0</name>